<name>CORO6_RAT</name>
<dbReference type="EMBL" id="AF140359">
    <property type="protein sequence ID" value="AAK98517.1"/>
    <property type="molecule type" value="mRNA"/>
</dbReference>
<dbReference type="EMBL" id="BC098656">
    <property type="protein sequence ID" value="AAH98656.1"/>
    <property type="molecule type" value="mRNA"/>
</dbReference>
<dbReference type="RefSeq" id="NP_620815.2">
    <property type="nucleotide sequence ID" value="NM_139115.2"/>
</dbReference>
<dbReference type="RefSeq" id="XP_006246947.1">
    <property type="nucleotide sequence ID" value="XM_006246885.5"/>
</dbReference>
<dbReference type="SMR" id="Q920J3"/>
<dbReference type="BioGRID" id="251471">
    <property type="interactions" value="2"/>
</dbReference>
<dbReference type="FunCoup" id="Q920J3">
    <property type="interactions" value="395"/>
</dbReference>
<dbReference type="IntAct" id="Q920J3">
    <property type="interactions" value="1"/>
</dbReference>
<dbReference type="MINT" id="Q920J3"/>
<dbReference type="STRING" id="10116.ENSRNOP00000019759"/>
<dbReference type="CarbonylDB" id="Q920J3"/>
<dbReference type="iPTMnet" id="Q920J3"/>
<dbReference type="PhosphoSitePlus" id="Q920J3"/>
<dbReference type="SwissPalm" id="Q920J3"/>
<dbReference type="PaxDb" id="10116-ENSRNOP00000019759"/>
<dbReference type="Ensembl" id="ENSRNOT00000019759.7">
    <property type="protein sequence ID" value="ENSRNOP00000019759.3"/>
    <property type="gene ID" value="ENSRNOG00000014496.8"/>
</dbReference>
<dbReference type="GeneID" id="245982"/>
<dbReference type="KEGG" id="rno:245982"/>
<dbReference type="AGR" id="RGD:708560"/>
<dbReference type="CTD" id="84940"/>
<dbReference type="RGD" id="708560">
    <property type="gene designation" value="Coro6"/>
</dbReference>
<dbReference type="eggNOG" id="KOG0303">
    <property type="taxonomic scope" value="Eukaryota"/>
</dbReference>
<dbReference type="GeneTree" id="ENSGT00940000159328"/>
<dbReference type="HOGENOM" id="CLU_026859_0_1_1"/>
<dbReference type="InParanoid" id="Q920J3"/>
<dbReference type="OrthoDB" id="1850764at2759"/>
<dbReference type="PhylomeDB" id="Q920J3"/>
<dbReference type="TreeFam" id="TF314280"/>
<dbReference type="PRO" id="PR:Q920J3"/>
<dbReference type="Proteomes" id="UP000002494">
    <property type="component" value="Chromosome 10"/>
</dbReference>
<dbReference type="Bgee" id="ENSRNOG00000014496">
    <property type="expression patterns" value="Expressed in heart and 20 other cell types or tissues"/>
</dbReference>
<dbReference type="GO" id="GO:0051015">
    <property type="term" value="F:actin filament binding"/>
    <property type="evidence" value="ECO:0000318"/>
    <property type="project" value="GO_Central"/>
</dbReference>
<dbReference type="GO" id="GO:0007015">
    <property type="term" value="P:actin filament organization"/>
    <property type="evidence" value="ECO:0000318"/>
    <property type="project" value="GO_Central"/>
</dbReference>
<dbReference type="GO" id="GO:0016477">
    <property type="term" value="P:cell migration"/>
    <property type="evidence" value="ECO:0000318"/>
    <property type="project" value="GO_Central"/>
</dbReference>
<dbReference type="FunFam" id="2.130.10.10:FF:000003">
    <property type="entry name" value="Coronin"/>
    <property type="match status" value="1"/>
</dbReference>
<dbReference type="Gene3D" id="2.130.10.10">
    <property type="entry name" value="YVTN repeat-like/Quinoprotein amine dehydrogenase"/>
    <property type="match status" value="1"/>
</dbReference>
<dbReference type="InterPro" id="IPR015505">
    <property type="entry name" value="Coronin"/>
</dbReference>
<dbReference type="InterPro" id="IPR015048">
    <property type="entry name" value="DUF1899"/>
</dbReference>
<dbReference type="InterPro" id="IPR015943">
    <property type="entry name" value="WD40/YVTN_repeat-like_dom_sf"/>
</dbReference>
<dbReference type="InterPro" id="IPR019775">
    <property type="entry name" value="WD40_repeat_CS"/>
</dbReference>
<dbReference type="InterPro" id="IPR036322">
    <property type="entry name" value="WD40_repeat_dom_sf"/>
</dbReference>
<dbReference type="InterPro" id="IPR001680">
    <property type="entry name" value="WD40_rpt"/>
</dbReference>
<dbReference type="PANTHER" id="PTHR10856">
    <property type="entry name" value="CORONIN"/>
    <property type="match status" value="1"/>
</dbReference>
<dbReference type="PANTHER" id="PTHR10856:SF23">
    <property type="entry name" value="CORONIN-6"/>
    <property type="match status" value="1"/>
</dbReference>
<dbReference type="Pfam" id="PF08953">
    <property type="entry name" value="DUF1899"/>
    <property type="match status" value="1"/>
</dbReference>
<dbReference type="Pfam" id="PF00400">
    <property type="entry name" value="WD40"/>
    <property type="match status" value="3"/>
</dbReference>
<dbReference type="Pfam" id="PF16300">
    <property type="entry name" value="WD40_4"/>
    <property type="match status" value="1"/>
</dbReference>
<dbReference type="SMART" id="SM01166">
    <property type="entry name" value="DUF1899"/>
    <property type="match status" value="1"/>
</dbReference>
<dbReference type="SMART" id="SM01167">
    <property type="entry name" value="DUF1900"/>
    <property type="match status" value="1"/>
</dbReference>
<dbReference type="SMART" id="SM00320">
    <property type="entry name" value="WD40"/>
    <property type="match status" value="3"/>
</dbReference>
<dbReference type="SUPFAM" id="SSF50978">
    <property type="entry name" value="WD40 repeat-like"/>
    <property type="match status" value="1"/>
</dbReference>
<dbReference type="PROSITE" id="PS00678">
    <property type="entry name" value="WD_REPEATS_1"/>
    <property type="match status" value="1"/>
</dbReference>
<dbReference type="PROSITE" id="PS50082">
    <property type="entry name" value="WD_REPEATS_2"/>
    <property type="match status" value="2"/>
</dbReference>
<dbReference type="PROSITE" id="PS50294">
    <property type="entry name" value="WD_REPEATS_REGION"/>
    <property type="match status" value="1"/>
</dbReference>
<feature type="chain" id="PRO_0000050933" description="Coronin-6">
    <location>
        <begin position="1"/>
        <end position="472"/>
    </location>
</feature>
<feature type="repeat" description="WD 1">
    <location>
        <begin position="79"/>
        <end position="119"/>
    </location>
</feature>
<feature type="repeat" description="WD 2">
    <location>
        <begin position="129"/>
        <end position="169"/>
    </location>
</feature>
<feature type="repeat" description="WD 3">
    <location>
        <begin position="173"/>
        <end position="212"/>
    </location>
</feature>
<feature type="repeat" description="WD 4">
    <location>
        <begin position="216"/>
        <end position="259"/>
    </location>
</feature>
<feature type="repeat" description="WD 5">
    <location>
        <begin position="264"/>
        <end position="304"/>
    </location>
</feature>
<feature type="region of interest" description="Disordered" evidence="2">
    <location>
        <begin position="409"/>
        <end position="434"/>
    </location>
</feature>
<feature type="coiled-coil region" evidence="1">
    <location>
        <begin position="430"/>
        <end position="469"/>
    </location>
</feature>
<feature type="compositionally biased region" description="Low complexity" evidence="2">
    <location>
        <begin position="419"/>
        <end position="429"/>
    </location>
</feature>
<feature type="sequence conflict" description="In Ref. 1; AAK98517." evidence="3" ref="1">
    <original>V</original>
    <variation>I</variation>
    <location>
        <position position="77"/>
    </location>
</feature>
<feature type="sequence conflict" description="In Ref. 1; AAK98517." evidence="3" ref="1">
    <original>A</original>
    <variation>P</variation>
    <location>
        <position position="100"/>
    </location>
</feature>
<organism>
    <name type="scientific">Rattus norvegicus</name>
    <name type="common">Rat</name>
    <dbReference type="NCBI Taxonomy" id="10116"/>
    <lineage>
        <taxon>Eukaryota</taxon>
        <taxon>Metazoa</taxon>
        <taxon>Chordata</taxon>
        <taxon>Craniata</taxon>
        <taxon>Vertebrata</taxon>
        <taxon>Euteleostomi</taxon>
        <taxon>Mammalia</taxon>
        <taxon>Eutheria</taxon>
        <taxon>Euarchontoglires</taxon>
        <taxon>Glires</taxon>
        <taxon>Rodentia</taxon>
        <taxon>Myomorpha</taxon>
        <taxon>Muroidea</taxon>
        <taxon>Muridae</taxon>
        <taxon>Murinae</taxon>
        <taxon>Rattus</taxon>
    </lineage>
</organism>
<accession>Q920J3</accession>
<accession>Q4G087</accession>
<gene>
    <name type="primary">Coro6</name>
</gene>
<reference key="1">
    <citation type="submission" date="1999-04" db="EMBL/GenBank/DDBJ databases">
        <title>Cloning a novel rat coronin relative protein gene.</title>
        <authorList>
            <person name="Tang H.B."/>
            <person name="Ip F.C.F."/>
            <person name="Cheung W.M.W."/>
            <person name="Ip N.Y."/>
        </authorList>
    </citation>
    <scope>NUCLEOTIDE SEQUENCE [MRNA]</scope>
</reference>
<reference key="2">
    <citation type="journal article" date="2004" name="Genome Res.">
        <title>The status, quality, and expansion of the NIH full-length cDNA project: the Mammalian Gene Collection (MGC).</title>
        <authorList>
            <consortium name="The MGC Project Team"/>
        </authorList>
    </citation>
    <scope>NUCLEOTIDE SEQUENCE [LARGE SCALE MRNA]</scope>
    <source>
        <tissue>Heart</tissue>
    </source>
</reference>
<keyword id="KW-0175">Coiled coil</keyword>
<keyword id="KW-1185">Reference proteome</keyword>
<keyword id="KW-0677">Repeat</keyword>
<keyword id="KW-0853">WD repeat</keyword>
<proteinExistence type="evidence at transcript level"/>
<evidence type="ECO:0000255" key="1"/>
<evidence type="ECO:0000256" key="2">
    <source>
        <dbReference type="SAM" id="MobiDB-lite"/>
    </source>
</evidence>
<evidence type="ECO:0000305" key="3"/>
<protein>
    <recommendedName>
        <fullName>Coronin-6</fullName>
    </recommendedName>
</protein>
<sequence length="472" mass="52948">MSRRVVRQSKFRHVFGQAAKADQAYEDIRVSKVTWDSAFCAVNPKFLAIIVEAGGGGAFIVLPLAKTGRVDKNYPLVTGHTGPVLDIDWCPHNDNVIASASDDTTVMVWQIPDYTPVRNITEPVITLEGHSKRVGILSWHPTARNVLLSAGGDNVIIIWNVGTGEVLLSLDDIHPDVIHSVCWNSNGSLLATTCKDKTLRIIDPRKSQVVAERFAAHEGMRPMRAVFTRLGHIFTTGFTRMSQRELGLWDPNNFEEPVALQEMDTSNGVLLPFYDPDSSIVYLCGKGDSSIRYFEITDEPPFVHYLNTFSSKEPQRGMGFMPKRGLDVSKCEIARFYKLHERKCEPIVMTVPRKSDLFQDDLYPDTPGPEPALEADEWLSGQDAEPVLISLKEGYVPPKHREFRVTKRNILDVRPPASPRRSQSASEAPLSQQHTLETLLEEMKALRERVQAQEERITALENMLCELVDGTD</sequence>